<dbReference type="EC" id="4.2.1.51"/>
<dbReference type="EMBL" id="L77117">
    <property type="protein sequence ID" value="AAB98631.1"/>
    <property type="molecule type" value="Genomic_DNA"/>
</dbReference>
<dbReference type="PIR" id="E64379">
    <property type="entry name" value="E64379"/>
</dbReference>
<dbReference type="RefSeq" id="WP_010870142.1">
    <property type="nucleotide sequence ID" value="NC_000909.1"/>
</dbReference>
<dbReference type="SMR" id="Q58054"/>
<dbReference type="FunCoup" id="Q58054">
    <property type="interactions" value="113"/>
</dbReference>
<dbReference type="STRING" id="243232.MJ_0637"/>
<dbReference type="PaxDb" id="243232-MJ_0637"/>
<dbReference type="EnsemblBacteria" id="AAB98631">
    <property type="protein sequence ID" value="AAB98631"/>
    <property type="gene ID" value="MJ_0637"/>
</dbReference>
<dbReference type="GeneID" id="1451503"/>
<dbReference type="KEGG" id="mja:MJ_0637"/>
<dbReference type="eggNOG" id="arCOG00255">
    <property type="taxonomic scope" value="Archaea"/>
</dbReference>
<dbReference type="HOGENOM" id="CLU_035008_0_2_2"/>
<dbReference type="InParanoid" id="Q58054"/>
<dbReference type="OrthoDB" id="8755at2157"/>
<dbReference type="PhylomeDB" id="Q58054"/>
<dbReference type="SABIO-RK" id="Q58054"/>
<dbReference type="UniPathway" id="UPA00121">
    <property type="reaction ID" value="UER00345"/>
</dbReference>
<dbReference type="Proteomes" id="UP000000805">
    <property type="component" value="Chromosome"/>
</dbReference>
<dbReference type="GO" id="GO:0005737">
    <property type="term" value="C:cytoplasm"/>
    <property type="evidence" value="ECO:0000318"/>
    <property type="project" value="GO_Central"/>
</dbReference>
<dbReference type="GO" id="GO:0004664">
    <property type="term" value="F:prephenate dehydratase activity"/>
    <property type="evidence" value="ECO:0000318"/>
    <property type="project" value="GO_Central"/>
</dbReference>
<dbReference type="GO" id="GO:0009094">
    <property type="term" value="P:L-phenylalanine biosynthetic process"/>
    <property type="evidence" value="ECO:0000318"/>
    <property type="project" value="GO_Central"/>
</dbReference>
<dbReference type="CDD" id="cd04905">
    <property type="entry name" value="ACT_CM-PDT"/>
    <property type="match status" value="1"/>
</dbReference>
<dbReference type="CDD" id="cd13532">
    <property type="entry name" value="PBP2_PDT_like"/>
    <property type="match status" value="1"/>
</dbReference>
<dbReference type="FunFam" id="3.40.190.10:FF:000034">
    <property type="entry name" value="Chorismate mutase/prephenate dehydratase"/>
    <property type="match status" value="1"/>
</dbReference>
<dbReference type="FunFam" id="3.30.70.260:FF:000012">
    <property type="entry name" value="Prephenate dehydratase"/>
    <property type="match status" value="1"/>
</dbReference>
<dbReference type="Gene3D" id="3.30.70.260">
    <property type="match status" value="1"/>
</dbReference>
<dbReference type="Gene3D" id="3.40.190.10">
    <property type="entry name" value="Periplasmic binding protein-like II"/>
    <property type="match status" value="2"/>
</dbReference>
<dbReference type="InterPro" id="IPR045865">
    <property type="entry name" value="ACT-like_dom_sf"/>
</dbReference>
<dbReference type="InterPro" id="IPR002912">
    <property type="entry name" value="ACT_dom"/>
</dbReference>
<dbReference type="InterPro" id="IPR001086">
    <property type="entry name" value="Preph_deHydtase"/>
</dbReference>
<dbReference type="InterPro" id="IPR018528">
    <property type="entry name" value="Preph_deHydtase_CS"/>
</dbReference>
<dbReference type="NCBIfam" id="NF008865">
    <property type="entry name" value="PRK11898.1"/>
    <property type="match status" value="1"/>
</dbReference>
<dbReference type="PANTHER" id="PTHR21022">
    <property type="entry name" value="PREPHENATE DEHYDRATASE P PROTEIN"/>
    <property type="match status" value="1"/>
</dbReference>
<dbReference type="PANTHER" id="PTHR21022:SF19">
    <property type="entry name" value="PREPHENATE DEHYDRATASE-RELATED"/>
    <property type="match status" value="1"/>
</dbReference>
<dbReference type="Pfam" id="PF01842">
    <property type="entry name" value="ACT"/>
    <property type="match status" value="1"/>
</dbReference>
<dbReference type="Pfam" id="PF00800">
    <property type="entry name" value="PDT"/>
    <property type="match status" value="1"/>
</dbReference>
<dbReference type="SUPFAM" id="SSF55021">
    <property type="entry name" value="ACT-like"/>
    <property type="match status" value="1"/>
</dbReference>
<dbReference type="SUPFAM" id="SSF53850">
    <property type="entry name" value="Periplasmic binding protein-like II"/>
    <property type="match status" value="1"/>
</dbReference>
<dbReference type="PROSITE" id="PS51671">
    <property type="entry name" value="ACT"/>
    <property type="match status" value="1"/>
</dbReference>
<dbReference type="PROSITE" id="PS00857">
    <property type="entry name" value="PREPHENATE_DEHYDR_1"/>
    <property type="match status" value="1"/>
</dbReference>
<dbReference type="PROSITE" id="PS00858">
    <property type="entry name" value="PREPHENATE_DEHYDR_2"/>
    <property type="match status" value="1"/>
</dbReference>
<dbReference type="PROSITE" id="PS51171">
    <property type="entry name" value="PREPHENATE_DEHYDR_3"/>
    <property type="match status" value="1"/>
</dbReference>
<organism>
    <name type="scientific">Methanocaldococcus jannaschii (strain ATCC 43067 / DSM 2661 / JAL-1 / JCM 10045 / NBRC 100440)</name>
    <name type="common">Methanococcus jannaschii</name>
    <dbReference type="NCBI Taxonomy" id="243232"/>
    <lineage>
        <taxon>Archaea</taxon>
        <taxon>Methanobacteriati</taxon>
        <taxon>Methanobacteriota</taxon>
        <taxon>Methanomada group</taxon>
        <taxon>Methanococci</taxon>
        <taxon>Methanococcales</taxon>
        <taxon>Methanocaldococcaceae</taxon>
        <taxon>Methanocaldococcus</taxon>
    </lineage>
</organism>
<name>PHEA_METJA</name>
<keyword id="KW-0028">Amino-acid biosynthesis</keyword>
<keyword id="KW-0057">Aromatic amino acid biosynthesis</keyword>
<keyword id="KW-0456">Lyase</keyword>
<keyword id="KW-0584">Phenylalanine biosynthesis</keyword>
<keyword id="KW-1185">Reference proteome</keyword>
<proteinExistence type="evidence at protein level"/>
<protein>
    <recommendedName>
        <fullName>Prephenate dehydratase</fullName>
        <shortName>PDT</shortName>
        <ecNumber>4.2.1.51</ecNumber>
    </recommendedName>
    <alternativeName>
        <fullName>MjPDT</fullName>
    </alternativeName>
</protein>
<evidence type="ECO:0000250" key="1"/>
<evidence type="ECO:0000255" key="2">
    <source>
        <dbReference type="PROSITE-ProRule" id="PRU00517"/>
    </source>
</evidence>
<evidence type="ECO:0000255" key="3">
    <source>
        <dbReference type="PROSITE-ProRule" id="PRU01007"/>
    </source>
</evidence>
<evidence type="ECO:0000269" key="4">
    <source>
    </source>
</evidence>
<feature type="chain" id="PRO_0000119180" description="Prephenate dehydratase">
    <location>
        <begin position="1"/>
        <end position="272"/>
    </location>
</feature>
<feature type="domain" description="Prephenate dehydratase" evidence="2">
    <location>
        <begin position="4"/>
        <end position="179"/>
    </location>
</feature>
<feature type="domain" description="ACT" evidence="3">
    <location>
        <begin position="194"/>
        <end position="269"/>
    </location>
</feature>
<feature type="site" description="Essential for activity" evidence="1">
    <location>
        <position position="172"/>
    </location>
</feature>
<reference key="1">
    <citation type="journal article" date="1996" name="Science">
        <title>Complete genome sequence of the methanogenic archaeon, Methanococcus jannaschii.</title>
        <authorList>
            <person name="Bult C.J."/>
            <person name="White O."/>
            <person name="Olsen G.J."/>
            <person name="Zhou L."/>
            <person name="Fleischmann R.D."/>
            <person name="Sutton G.G."/>
            <person name="Blake J.A."/>
            <person name="FitzGerald L.M."/>
            <person name="Clayton R.A."/>
            <person name="Gocayne J.D."/>
            <person name="Kerlavage A.R."/>
            <person name="Dougherty B.A."/>
            <person name="Tomb J.-F."/>
            <person name="Adams M.D."/>
            <person name="Reich C.I."/>
            <person name="Overbeek R."/>
            <person name="Kirkness E.F."/>
            <person name="Weinstock K.G."/>
            <person name="Merrick J.M."/>
            <person name="Glodek A."/>
            <person name="Scott J.L."/>
            <person name="Geoghagen N.S.M."/>
            <person name="Weidman J.F."/>
            <person name="Fuhrmann J.L."/>
            <person name="Nguyen D."/>
            <person name="Utterback T.R."/>
            <person name="Kelley J.M."/>
            <person name="Peterson J.D."/>
            <person name="Sadow P.W."/>
            <person name="Hanna M.C."/>
            <person name="Cotton M.D."/>
            <person name="Roberts K.M."/>
            <person name="Hurst M.A."/>
            <person name="Kaine B.P."/>
            <person name="Borodovsky M."/>
            <person name="Klenk H.-P."/>
            <person name="Fraser C.M."/>
            <person name="Smith H.O."/>
            <person name="Woese C.R."/>
            <person name="Venter J.C."/>
        </authorList>
    </citation>
    <scope>NUCLEOTIDE SEQUENCE [LARGE SCALE GENOMIC DNA]</scope>
    <source>
        <strain>ATCC 43067 / DSM 2661 / JAL-1 / JCM 10045 / NBRC 100440</strain>
    </source>
</reference>
<reference key="2">
    <citation type="journal article" date="2006" name="Biochemistry">
        <title>A monofunctional and thermostable prephenate dehydratase from the archaeon Methanocaldococcus jannaschii.</title>
        <authorList>
            <person name="Kleeb A.C."/>
            <person name="Kast P."/>
            <person name="Hilvert D."/>
        </authorList>
    </citation>
    <scope>BIOPHYSICAL CHARACTERIZATION</scope>
    <scope>SUBUNIT</scope>
    <scope>MASS SPECTROMETRY</scope>
    <scope>INHIBITION</scope>
</reference>
<accession>Q58054</accession>
<gene>
    <name type="primary">pheA</name>
    <name type="ordered locus">MJ0637</name>
</gene>
<comment type="catalytic activity">
    <reaction>
        <text>prephenate + H(+) = 3-phenylpyruvate + CO2 + H2O</text>
        <dbReference type="Rhea" id="RHEA:21648"/>
        <dbReference type="ChEBI" id="CHEBI:15377"/>
        <dbReference type="ChEBI" id="CHEBI:15378"/>
        <dbReference type="ChEBI" id="CHEBI:16526"/>
        <dbReference type="ChEBI" id="CHEBI:18005"/>
        <dbReference type="ChEBI" id="CHEBI:29934"/>
        <dbReference type="EC" id="4.2.1.51"/>
    </reaction>
</comment>
<comment type="activity regulation">
    <text>Inhibited by L-phenylalanine but not by L-tyrosine or L-tryptophan.</text>
</comment>
<comment type="biophysicochemical properties">
    <kinetics>
        <KM>22 uM for prephenate</KM>
    </kinetics>
    <phDependence>
        <text>Optimum pH is 5-10.</text>
    </phDependence>
    <temperatureDependence>
        <text>Thermostable.</text>
    </temperatureDependence>
</comment>
<comment type="pathway">
    <text>Amino-acid biosynthesis; L-phenylalanine biosynthesis; phenylpyruvate from prephenate: step 1/1.</text>
</comment>
<comment type="subunit">
    <text evidence="4">Homodimer.</text>
</comment>
<comment type="mass spectrometry"/>
<sequence>MNKAVIYTLPKGTYSEKATKKFLDYIDGDYKIDYCNSIYDVFERVDNNGLGVVPIENSIEGSVSLTQDLLLQFKDIKILGELALDIHHNLIGYDKNKIKTVISHPQALAQCRNYIKKHGWDVKAVESTAKAVKIVAESKDETLGAIGSKESAEHYNLKILDENIEDYKNNKTRFILIGKKVKFKYHPKNYKVSIVFELKEDKPGALYHILKEFAERNINLTRIESRPSKKRLGTYIFYIDFENNKEKLEEILKSLERHTTFINLLGKYPVFD</sequence>